<keyword id="KW-0002">3D-structure</keyword>
<keyword id="KW-1185">Reference proteome</keyword>
<keyword id="KW-0687">Ribonucleoprotein</keyword>
<keyword id="KW-0689">Ribosomal protein</keyword>
<accession>P94266</accession>
<gene>
    <name evidence="1" type="primary">rpsJ</name>
    <name type="ordered locus">BB_0477</name>
</gene>
<protein>
    <recommendedName>
        <fullName evidence="1">Small ribosomal subunit protein uS10</fullName>
    </recommendedName>
    <alternativeName>
        <fullName evidence="2">30S ribosomal protein S10</fullName>
    </alternativeName>
</protein>
<dbReference type="EMBL" id="U78193">
    <property type="protein sequence ID" value="AAB36821.1"/>
    <property type="molecule type" value="Genomic_DNA"/>
</dbReference>
<dbReference type="EMBL" id="AE000783">
    <property type="protein sequence ID" value="AAC66865.1"/>
    <property type="molecule type" value="Genomic_DNA"/>
</dbReference>
<dbReference type="PIR" id="D70159">
    <property type="entry name" value="D70159"/>
</dbReference>
<dbReference type="RefSeq" id="NP_212611.1">
    <property type="nucleotide sequence ID" value="NC_001318.1"/>
</dbReference>
<dbReference type="RefSeq" id="WP_002557068.1">
    <property type="nucleotide sequence ID" value="NC_001318.1"/>
</dbReference>
<dbReference type="PDB" id="8FMW">
    <property type="method" value="EM"/>
    <property type="resolution" value="2.86 A"/>
    <property type="chains" value="J=2-103"/>
</dbReference>
<dbReference type="PDBsum" id="8FMW"/>
<dbReference type="EMDB" id="EMD-29298"/>
<dbReference type="SMR" id="P94266"/>
<dbReference type="STRING" id="224326.BB_0477"/>
<dbReference type="PaxDb" id="224326-BB_0477"/>
<dbReference type="EnsemblBacteria" id="AAC66865">
    <property type="protein sequence ID" value="AAC66865"/>
    <property type="gene ID" value="BB_0477"/>
</dbReference>
<dbReference type="GeneID" id="77265324"/>
<dbReference type="KEGG" id="bbu:BB_0477"/>
<dbReference type="PATRIC" id="fig|224326.49.peg.868"/>
<dbReference type="HOGENOM" id="CLU_122625_1_3_12"/>
<dbReference type="OrthoDB" id="9804464at2"/>
<dbReference type="PRO" id="PR:P94266"/>
<dbReference type="Proteomes" id="UP000001807">
    <property type="component" value="Chromosome"/>
</dbReference>
<dbReference type="GO" id="GO:1990904">
    <property type="term" value="C:ribonucleoprotein complex"/>
    <property type="evidence" value="ECO:0007669"/>
    <property type="project" value="UniProtKB-KW"/>
</dbReference>
<dbReference type="GO" id="GO:0005840">
    <property type="term" value="C:ribosome"/>
    <property type="evidence" value="ECO:0007669"/>
    <property type="project" value="UniProtKB-KW"/>
</dbReference>
<dbReference type="GO" id="GO:0003735">
    <property type="term" value="F:structural constituent of ribosome"/>
    <property type="evidence" value="ECO:0007669"/>
    <property type="project" value="InterPro"/>
</dbReference>
<dbReference type="GO" id="GO:0000049">
    <property type="term" value="F:tRNA binding"/>
    <property type="evidence" value="ECO:0007669"/>
    <property type="project" value="UniProtKB-UniRule"/>
</dbReference>
<dbReference type="GO" id="GO:0006412">
    <property type="term" value="P:translation"/>
    <property type="evidence" value="ECO:0007669"/>
    <property type="project" value="UniProtKB-UniRule"/>
</dbReference>
<dbReference type="FunFam" id="3.30.70.600:FF:000003">
    <property type="entry name" value="30S ribosomal protein S10"/>
    <property type="match status" value="1"/>
</dbReference>
<dbReference type="Gene3D" id="3.30.70.600">
    <property type="entry name" value="Ribosomal protein S10 domain"/>
    <property type="match status" value="1"/>
</dbReference>
<dbReference type="HAMAP" id="MF_00508">
    <property type="entry name" value="Ribosomal_uS10"/>
    <property type="match status" value="1"/>
</dbReference>
<dbReference type="InterPro" id="IPR001848">
    <property type="entry name" value="Ribosomal_uS10"/>
</dbReference>
<dbReference type="InterPro" id="IPR027486">
    <property type="entry name" value="Ribosomal_uS10_dom"/>
</dbReference>
<dbReference type="InterPro" id="IPR036838">
    <property type="entry name" value="Ribosomal_uS10_dom_sf"/>
</dbReference>
<dbReference type="NCBIfam" id="NF001861">
    <property type="entry name" value="PRK00596.1"/>
    <property type="match status" value="1"/>
</dbReference>
<dbReference type="NCBIfam" id="TIGR01049">
    <property type="entry name" value="rpsJ_bact"/>
    <property type="match status" value="1"/>
</dbReference>
<dbReference type="PANTHER" id="PTHR11700">
    <property type="entry name" value="30S RIBOSOMAL PROTEIN S10 FAMILY MEMBER"/>
    <property type="match status" value="1"/>
</dbReference>
<dbReference type="Pfam" id="PF00338">
    <property type="entry name" value="Ribosomal_S10"/>
    <property type="match status" value="1"/>
</dbReference>
<dbReference type="PRINTS" id="PR00971">
    <property type="entry name" value="RIBOSOMALS10"/>
</dbReference>
<dbReference type="SMART" id="SM01403">
    <property type="entry name" value="Ribosomal_S10"/>
    <property type="match status" value="1"/>
</dbReference>
<dbReference type="SUPFAM" id="SSF54999">
    <property type="entry name" value="Ribosomal protein S10"/>
    <property type="match status" value="1"/>
</dbReference>
<feature type="chain" id="PRO_0000146502" description="Small ribosomal subunit protein uS10">
    <location>
        <begin position="1"/>
        <end position="103"/>
    </location>
</feature>
<name>RS10_BORBU</name>
<reference key="1">
    <citation type="submission" date="1996-12" db="EMBL/GenBank/DDBJ databases">
        <authorList>
            <person name="Perlee L."/>
            <person name="Qi H."/>
            <person name="Schwartz I."/>
        </authorList>
    </citation>
    <scope>NUCLEOTIDE SEQUENCE [GENOMIC DNA]</scope>
    <source>
        <strain>ATCC 35210 / DSM 4680 / CIP 102532 / B31</strain>
    </source>
</reference>
<reference key="2">
    <citation type="journal article" date="1997" name="Nature">
        <title>Genomic sequence of a Lyme disease spirochaete, Borrelia burgdorferi.</title>
        <authorList>
            <person name="Fraser C.M."/>
            <person name="Casjens S."/>
            <person name="Huang W.M."/>
            <person name="Sutton G.G."/>
            <person name="Clayton R.A."/>
            <person name="Lathigra R."/>
            <person name="White O."/>
            <person name="Ketchum K.A."/>
            <person name="Dodson R.J."/>
            <person name="Hickey E.K."/>
            <person name="Gwinn M.L."/>
            <person name="Dougherty B.A."/>
            <person name="Tomb J.-F."/>
            <person name="Fleischmann R.D."/>
            <person name="Richardson D.L."/>
            <person name="Peterson J.D."/>
            <person name="Kerlavage A.R."/>
            <person name="Quackenbush J."/>
            <person name="Salzberg S.L."/>
            <person name="Hanson M."/>
            <person name="van Vugt R."/>
            <person name="Palmer N."/>
            <person name="Adams M.D."/>
            <person name="Gocayne J.D."/>
            <person name="Weidman J.F."/>
            <person name="Utterback T.R."/>
            <person name="Watthey L."/>
            <person name="McDonald L.A."/>
            <person name="Artiach P."/>
            <person name="Bowman C."/>
            <person name="Garland S.A."/>
            <person name="Fujii C."/>
            <person name="Cotton M.D."/>
            <person name="Horst K."/>
            <person name="Roberts K.M."/>
            <person name="Hatch B."/>
            <person name="Smith H.O."/>
            <person name="Venter J.C."/>
        </authorList>
    </citation>
    <scope>NUCLEOTIDE SEQUENCE [LARGE SCALE GENOMIC DNA]</scope>
    <source>
        <strain>ATCC 35210 / DSM 4680 / CIP 102532 / B31</strain>
    </source>
</reference>
<evidence type="ECO:0000255" key="1">
    <source>
        <dbReference type="HAMAP-Rule" id="MF_00508"/>
    </source>
</evidence>
<evidence type="ECO:0000305" key="2"/>
<comment type="function">
    <text evidence="1">Involved in the binding of tRNA to the ribosomes.</text>
</comment>
<comment type="subunit">
    <text evidence="1">Part of the 30S ribosomal subunit.</text>
</comment>
<comment type="similarity">
    <text evidence="1">Belongs to the universal ribosomal protein uS10 family.</text>
</comment>
<proteinExistence type="evidence at protein level"/>
<organism>
    <name type="scientific">Borreliella burgdorferi (strain ATCC 35210 / DSM 4680 / CIP 102532 / B31)</name>
    <name type="common">Borrelia burgdorferi</name>
    <dbReference type="NCBI Taxonomy" id="224326"/>
    <lineage>
        <taxon>Bacteria</taxon>
        <taxon>Pseudomonadati</taxon>
        <taxon>Spirochaetota</taxon>
        <taxon>Spirochaetia</taxon>
        <taxon>Spirochaetales</taxon>
        <taxon>Borreliaceae</taxon>
        <taxon>Borreliella</taxon>
    </lineage>
</organism>
<sequence>MIAKDKIRVRLFSFDVKILDQSAESIVKAVQKAKAQIKGPIPLPTKIKKYTVLRSPHVNKKSREQFEMRTHKRLIDILEPTSALMDSLMKLELPAGVEVDIKQ</sequence>